<evidence type="ECO:0000255" key="1">
    <source>
        <dbReference type="HAMAP-Rule" id="MF_00277"/>
    </source>
</evidence>
<evidence type="ECO:0000255" key="2">
    <source>
        <dbReference type="PROSITE-ProRule" id="PRU01175"/>
    </source>
</evidence>
<organism>
    <name type="scientific">Yersinia enterocolitica serotype O:8 / biotype 1B (strain NCTC 13174 / 8081)</name>
    <dbReference type="NCBI Taxonomy" id="393305"/>
    <lineage>
        <taxon>Bacteria</taxon>
        <taxon>Pseudomonadati</taxon>
        <taxon>Pseudomonadota</taxon>
        <taxon>Gammaproteobacteria</taxon>
        <taxon>Enterobacterales</taxon>
        <taxon>Yersiniaceae</taxon>
        <taxon>Yersinia</taxon>
    </lineage>
</organism>
<proteinExistence type="inferred from homology"/>
<protein>
    <recommendedName>
        <fullName evidence="1">Bifunctional uridylyltransferase/uridylyl-removing enzyme</fullName>
        <shortName evidence="1">UTase/UR</shortName>
    </recommendedName>
    <alternativeName>
        <fullName evidence="1">Bifunctional [protein-PII] modification enzyme</fullName>
    </alternativeName>
    <alternativeName>
        <fullName evidence="1">Bifunctional nitrogen sensor protein</fullName>
    </alternativeName>
    <domain>
        <recommendedName>
            <fullName evidence="1">[Protein-PII] uridylyltransferase</fullName>
            <shortName evidence="1">PII uridylyltransferase</shortName>
            <shortName evidence="1">UTase</shortName>
            <ecNumber evidence="1">2.7.7.59</ecNumber>
        </recommendedName>
    </domain>
    <domain>
        <recommendedName>
            <fullName evidence="1">[Protein-PII]-UMP uridylyl-removing enzyme</fullName>
            <shortName evidence="1">UR</shortName>
            <ecNumber evidence="1">3.1.4.-</ecNumber>
        </recommendedName>
    </domain>
</protein>
<comment type="function">
    <text evidence="1">Modifies, by uridylylation and deuridylylation, the PII regulatory proteins (GlnB and homologs), in response to the nitrogen status of the cell that GlnD senses through the glutamine level. Under low glutamine levels, catalyzes the conversion of the PII proteins and UTP to PII-UMP and PPi, while under higher glutamine levels, GlnD hydrolyzes PII-UMP to PII and UMP (deuridylylation). Thus, controls uridylylation state and activity of the PII proteins, and plays an important role in the regulation of nitrogen assimilation and metabolism.</text>
</comment>
<comment type="catalytic activity">
    <reaction evidence="1">
        <text>[protein-PII]-L-tyrosine + UTP = [protein-PII]-uridylyl-L-tyrosine + diphosphate</text>
        <dbReference type="Rhea" id="RHEA:13673"/>
        <dbReference type="Rhea" id="RHEA-COMP:12147"/>
        <dbReference type="Rhea" id="RHEA-COMP:12148"/>
        <dbReference type="ChEBI" id="CHEBI:33019"/>
        <dbReference type="ChEBI" id="CHEBI:46398"/>
        <dbReference type="ChEBI" id="CHEBI:46858"/>
        <dbReference type="ChEBI" id="CHEBI:90602"/>
        <dbReference type="EC" id="2.7.7.59"/>
    </reaction>
</comment>
<comment type="catalytic activity">
    <reaction evidence="1">
        <text>[protein-PII]-uridylyl-L-tyrosine + H2O = [protein-PII]-L-tyrosine + UMP + H(+)</text>
        <dbReference type="Rhea" id="RHEA:48600"/>
        <dbReference type="Rhea" id="RHEA-COMP:12147"/>
        <dbReference type="Rhea" id="RHEA-COMP:12148"/>
        <dbReference type="ChEBI" id="CHEBI:15377"/>
        <dbReference type="ChEBI" id="CHEBI:15378"/>
        <dbReference type="ChEBI" id="CHEBI:46858"/>
        <dbReference type="ChEBI" id="CHEBI:57865"/>
        <dbReference type="ChEBI" id="CHEBI:90602"/>
    </reaction>
</comment>
<comment type="cofactor">
    <cofactor evidence="1">
        <name>Mg(2+)</name>
        <dbReference type="ChEBI" id="CHEBI:18420"/>
    </cofactor>
</comment>
<comment type="activity regulation">
    <text evidence="1">Uridylyltransferase (UTase) activity is inhibited by glutamine, while glutamine activates uridylyl-removing (UR) activity.</text>
</comment>
<comment type="domain">
    <text evidence="1">Has four distinct domains: an N-terminal nucleotidyltransferase (NT) domain responsible for UTase activity, a central HD domain that encodes UR activity, and two C-terminal ACT domains that seem to have a role in glutamine sensing.</text>
</comment>
<comment type="similarity">
    <text evidence="1">Belongs to the GlnD family.</text>
</comment>
<sequence>MSDNHTEHSVLPAVTKVIPEQPASPATYLDSELNCPELKQRLETFQSWLADAFNGGISAETLIAARSDYIDRLLGRLWTFYGFDDVPETALVAVGGYGRGELHPLSDIDVLILSKQRLNDEHAQRVGQLITLLWDLKLEVGHSVRTLEECLLEGLADLTVATNMVESRLICGDVALFLQMQKHIFSDNFWPSPKFFHAKVVEQQERHKRYHGTSYNLEPDIKSSPGGLRDIHTLQWVARRHFGATSLSEMVDFGFLTKAERNELIESQSFLWRIRFALHLVLTRYDNRLLFDRQLSVAQLLQYQGEGNEPVERMMKDFYRMTRRVSELNNMLLQLFDEAILALDTNEKPRPLDDEFQLRGDLIDLRDENLFVDKPEAIMRMFYLMVRNQDIKGIYSTTVRRLRHARRHLKQPLCNIPEARKLFMAILRHPGAVSRALLPMHRHSVLWAYMPQWGSIVGQMQFDLFHAYTVDEHTIRVLLKLESFADESTRPRHPLCVELYPRLPQPELLLLAALFHDIAKGRGGDHSILGAHDVLEFAEQHGLNSREAQLVAWLVRCHLLMSVTAQRRDIQDPAVIQQFSAEVQSETRLRYLVSLTVADICATNENLWNSWKQSLLRELYFATEKQLRRGMQNSPDLRERVRHHRLQALALLRMDNIDEEALHHIWSRCRADYFLRHSPNQLAWHARHLLEHDSTKPLVLVSRQATRGGTEIFIWCPDRPSLFAAVVGELDRRNLSVHDAQIFTNRDGMAMDTFIVLEPDGSPLAQDRHPIIIHALQQAMTRQNYQHPRVRRLSPKLRHFSVPTETNFLPTHNERRTYLELIALDQPGLLARVGDIFADLGLSLHSARITTIGERVEDLFVLADKDRRALSIETRRELAQRLTDTLNPNDKL</sequence>
<dbReference type="EC" id="2.7.7.59" evidence="1"/>
<dbReference type="EC" id="3.1.4.-" evidence="1"/>
<dbReference type="EMBL" id="AM286415">
    <property type="protein sequence ID" value="CAL13316.1"/>
    <property type="molecule type" value="Genomic_DNA"/>
</dbReference>
<dbReference type="RefSeq" id="WP_005173232.1">
    <property type="nucleotide sequence ID" value="NC_008800.1"/>
</dbReference>
<dbReference type="RefSeq" id="YP_001007460.1">
    <property type="nucleotide sequence ID" value="NC_008800.1"/>
</dbReference>
<dbReference type="SMR" id="A1JP85"/>
<dbReference type="KEGG" id="yen:YE3286"/>
<dbReference type="PATRIC" id="fig|393305.7.peg.3496"/>
<dbReference type="eggNOG" id="COG2844">
    <property type="taxonomic scope" value="Bacteria"/>
</dbReference>
<dbReference type="HOGENOM" id="CLU_012833_0_0_6"/>
<dbReference type="OrthoDB" id="9758038at2"/>
<dbReference type="Proteomes" id="UP000000642">
    <property type="component" value="Chromosome"/>
</dbReference>
<dbReference type="GO" id="GO:0008773">
    <property type="term" value="F:[protein-PII] uridylyltransferase activity"/>
    <property type="evidence" value="ECO:0007669"/>
    <property type="project" value="UniProtKB-UniRule"/>
</dbReference>
<dbReference type="GO" id="GO:0008081">
    <property type="term" value="F:phosphoric diester hydrolase activity"/>
    <property type="evidence" value="ECO:0007669"/>
    <property type="project" value="UniProtKB-UniRule"/>
</dbReference>
<dbReference type="GO" id="GO:0006808">
    <property type="term" value="P:regulation of nitrogen utilization"/>
    <property type="evidence" value="ECO:0007669"/>
    <property type="project" value="UniProtKB-UniRule"/>
</dbReference>
<dbReference type="CDD" id="cd04899">
    <property type="entry name" value="ACT_ACR-UUR-like_2"/>
    <property type="match status" value="1"/>
</dbReference>
<dbReference type="CDD" id="cd04900">
    <property type="entry name" value="ACT_UUR-like_1"/>
    <property type="match status" value="1"/>
</dbReference>
<dbReference type="CDD" id="cd00077">
    <property type="entry name" value="HDc"/>
    <property type="match status" value="1"/>
</dbReference>
<dbReference type="CDD" id="cd05401">
    <property type="entry name" value="NT_GlnE_GlnD_like"/>
    <property type="match status" value="1"/>
</dbReference>
<dbReference type="FunFam" id="1.10.3210.10:FF:000005">
    <property type="entry name" value="Bifunctional uridylyltransferase/uridylyl-removing enzyme"/>
    <property type="match status" value="1"/>
</dbReference>
<dbReference type="Gene3D" id="1.10.3210.10">
    <property type="entry name" value="Hypothetical protein af1432"/>
    <property type="match status" value="1"/>
</dbReference>
<dbReference type="Gene3D" id="1.20.120.330">
    <property type="entry name" value="Nucleotidyltransferases domain 2"/>
    <property type="match status" value="1"/>
</dbReference>
<dbReference type="HAMAP" id="MF_00277">
    <property type="entry name" value="PII_uridylyl_transf"/>
    <property type="match status" value="1"/>
</dbReference>
<dbReference type="InterPro" id="IPR045865">
    <property type="entry name" value="ACT-like_dom_sf"/>
</dbReference>
<dbReference type="InterPro" id="IPR002912">
    <property type="entry name" value="ACT_dom"/>
</dbReference>
<dbReference type="InterPro" id="IPR003607">
    <property type="entry name" value="HD/PDEase_dom"/>
</dbReference>
<dbReference type="InterPro" id="IPR006674">
    <property type="entry name" value="HD_domain"/>
</dbReference>
<dbReference type="InterPro" id="IPR043519">
    <property type="entry name" value="NT_sf"/>
</dbReference>
<dbReference type="InterPro" id="IPR013546">
    <property type="entry name" value="PII_UdlTrfase/GS_AdlTrfase"/>
</dbReference>
<dbReference type="InterPro" id="IPR002934">
    <property type="entry name" value="Polymerase_NTP_transf_dom"/>
</dbReference>
<dbReference type="InterPro" id="IPR010043">
    <property type="entry name" value="UTase/UR"/>
</dbReference>
<dbReference type="NCBIfam" id="NF002487">
    <property type="entry name" value="PRK01759.1"/>
    <property type="match status" value="1"/>
</dbReference>
<dbReference type="NCBIfam" id="NF003448">
    <property type="entry name" value="PRK05007.1"/>
    <property type="match status" value="1"/>
</dbReference>
<dbReference type="NCBIfam" id="TIGR01693">
    <property type="entry name" value="UTase_glnD"/>
    <property type="match status" value="1"/>
</dbReference>
<dbReference type="PANTHER" id="PTHR47320">
    <property type="entry name" value="BIFUNCTIONAL URIDYLYLTRANSFERASE/URIDYLYL-REMOVING ENZYME"/>
    <property type="match status" value="1"/>
</dbReference>
<dbReference type="PANTHER" id="PTHR47320:SF1">
    <property type="entry name" value="BIFUNCTIONAL URIDYLYLTRANSFERASE_URIDYLYL-REMOVING ENZYME"/>
    <property type="match status" value="1"/>
</dbReference>
<dbReference type="Pfam" id="PF01842">
    <property type="entry name" value="ACT"/>
    <property type="match status" value="2"/>
</dbReference>
<dbReference type="Pfam" id="PF08335">
    <property type="entry name" value="GlnD_UR_UTase"/>
    <property type="match status" value="1"/>
</dbReference>
<dbReference type="Pfam" id="PF01966">
    <property type="entry name" value="HD"/>
    <property type="match status" value="1"/>
</dbReference>
<dbReference type="Pfam" id="PF01909">
    <property type="entry name" value="NTP_transf_2"/>
    <property type="match status" value="1"/>
</dbReference>
<dbReference type="PIRSF" id="PIRSF006288">
    <property type="entry name" value="PII_uridyltransf"/>
    <property type="match status" value="1"/>
</dbReference>
<dbReference type="SMART" id="SM00471">
    <property type="entry name" value="HDc"/>
    <property type="match status" value="1"/>
</dbReference>
<dbReference type="SUPFAM" id="SSF55021">
    <property type="entry name" value="ACT-like"/>
    <property type="match status" value="2"/>
</dbReference>
<dbReference type="SUPFAM" id="SSF109604">
    <property type="entry name" value="HD-domain/PDEase-like"/>
    <property type="match status" value="1"/>
</dbReference>
<dbReference type="SUPFAM" id="SSF81301">
    <property type="entry name" value="Nucleotidyltransferase"/>
    <property type="match status" value="1"/>
</dbReference>
<dbReference type="SUPFAM" id="SSF81593">
    <property type="entry name" value="Nucleotidyltransferase substrate binding subunit/domain"/>
    <property type="match status" value="1"/>
</dbReference>
<dbReference type="SUPFAM" id="SSF81891">
    <property type="entry name" value="Poly A polymerase C-terminal region-like"/>
    <property type="match status" value="1"/>
</dbReference>
<dbReference type="PROSITE" id="PS51671">
    <property type="entry name" value="ACT"/>
    <property type="match status" value="2"/>
</dbReference>
<dbReference type="PROSITE" id="PS51831">
    <property type="entry name" value="HD"/>
    <property type="match status" value="1"/>
</dbReference>
<gene>
    <name evidence="1" type="primary">glnD</name>
    <name type="ordered locus">YE3286</name>
</gene>
<name>GLND_YERE8</name>
<keyword id="KW-0378">Hydrolase</keyword>
<keyword id="KW-0460">Magnesium</keyword>
<keyword id="KW-0511">Multifunctional enzyme</keyword>
<keyword id="KW-0548">Nucleotidyltransferase</keyword>
<keyword id="KW-0677">Repeat</keyword>
<keyword id="KW-0808">Transferase</keyword>
<feature type="chain" id="PRO_1000022356" description="Bifunctional uridylyltransferase/uridylyl-removing enzyme">
    <location>
        <begin position="1"/>
        <end position="892"/>
    </location>
</feature>
<feature type="domain" description="HD" evidence="2">
    <location>
        <begin position="470"/>
        <end position="592"/>
    </location>
</feature>
<feature type="domain" description="ACT 1" evidence="1">
    <location>
        <begin position="711"/>
        <end position="792"/>
    </location>
</feature>
<feature type="domain" description="ACT 2" evidence="1">
    <location>
        <begin position="818"/>
        <end position="892"/>
    </location>
</feature>
<feature type="region of interest" description="Uridylyltransferase">
    <location>
        <begin position="1"/>
        <end position="351"/>
    </location>
</feature>
<feature type="region of interest" description="Uridylyl-removing">
    <location>
        <begin position="352"/>
        <end position="710"/>
    </location>
</feature>
<accession>A1JP85</accession>
<reference key="1">
    <citation type="journal article" date="2006" name="PLoS Genet.">
        <title>The complete genome sequence and comparative genome analysis of the high pathogenicity Yersinia enterocolitica strain 8081.</title>
        <authorList>
            <person name="Thomson N.R."/>
            <person name="Howard S."/>
            <person name="Wren B.W."/>
            <person name="Holden M.T.G."/>
            <person name="Crossman L."/>
            <person name="Challis G.L."/>
            <person name="Churcher C."/>
            <person name="Mungall K."/>
            <person name="Brooks K."/>
            <person name="Chillingworth T."/>
            <person name="Feltwell T."/>
            <person name="Abdellah Z."/>
            <person name="Hauser H."/>
            <person name="Jagels K."/>
            <person name="Maddison M."/>
            <person name="Moule S."/>
            <person name="Sanders M."/>
            <person name="Whitehead S."/>
            <person name="Quail M.A."/>
            <person name="Dougan G."/>
            <person name="Parkhill J."/>
            <person name="Prentice M.B."/>
        </authorList>
    </citation>
    <scope>NUCLEOTIDE SEQUENCE [LARGE SCALE GENOMIC DNA]</scope>
    <source>
        <strain>NCTC 13174 / 8081</strain>
    </source>
</reference>